<name>YQGF_STRZJ</name>
<accession>C1CBZ4</accession>
<gene>
    <name type="ordered locus">SPJ_0207</name>
</gene>
<sequence>MRIMGLDVGSKTVGVAISDPLGFTAQGLEIIQINEEQGQFGFDRVKELVDTYKVERFVVGLPKNMNNTSGPRVEASQAYGAKLEEFFGLPVDYQDERLTTVAAERMLIEQADISRNKRKKVIDKLAAQLILQNYLDRKF</sequence>
<feature type="chain" id="PRO_1000147495" description="Putative pre-16S rRNA nuclease">
    <location>
        <begin position="1"/>
        <end position="139"/>
    </location>
</feature>
<reference key="1">
    <citation type="journal article" date="2010" name="Genome Biol.">
        <title>Structure and dynamics of the pan-genome of Streptococcus pneumoniae and closely related species.</title>
        <authorList>
            <person name="Donati C."/>
            <person name="Hiller N.L."/>
            <person name="Tettelin H."/>
            <person name="Muzzi A."/>
            <person name="Croucher N.J."/>
            <person name="Angiuoli S.V."/>
            <person name="Oggioni M."/>
            <person name="Dunning Hotopp J.C."/>
            <person name="Hu F.Z."/>
            <person name="Riley D.R."/>
            <person name="Covacci A."/>
            <person name="Mitchell T.J."/>
            <person name="Bentley S.D."/>
            <person name="Kilian M."/>
            <person name="Ehrlich G.D."/>
            <person name="Rappuoli R."/>
            <person name="Moxon E.R."/>
            <person name="Masignani V."/>
        </authorList>
    </citation>
    <scope>NUCLEOTIDE SEQUENCE [LARGE SCALE GENOMIC DNA]</scope>
    <source>
        <strain>JJA</strain>
    </source>
</reference>
<protein>
    <recommendedName>
        <fullName evidence="1">Putative pre-16S rRNA nuclease</fullName>
        <ecNumber evidence="1">3.1.-.-</ecNumber>
    </recommendedName>
</protein>
<dbReference type="EC" id="3.1.-.-" evidence="1"/>
<dbReference type="EMBL" id="CP000919">
    <property type="protein sequence ID" value="ACO18076.1"/>
    <property type="molecule type" value="Genomic_DNA"/>
</dbReference>
<dbReference type="SMR" id="C1CBZ4"/>
<dbReference type="KEGG" id="sjj:SPJ_0207"/>
<dbReference type="HOGENOM" id="CLU_098240_2_0_9"/>
<dbReference type="Proteomes" id="UP000002206">
    <property type="component" value="Chromosome"/>
</dbReference>
<dbReference type="GO" id="GO:0005829">
    <property type="term" value="C:cytosol"/>
    <property type="evidence" value="ECO:0007669"/>
    <property type="project" value="TreeGrafter"/>
</dbReference>
<dbReference type="GO" id="GO:0004518">
    <property type="term" value="F:nuclease activity"/>
    <property type="evidence" value="ECO:0007669"/>
    <property type="project" value="UniProtKB-KW"/>
</dbReference>
<dbReference type="GO" id="GO:0000967">
    <property type="term" value="P:rRNA 5'-end processing"/>
    <property type="evidence" value="ECO:0007669"/>
    <property type="project" value="UniProtKB-UniRule"/>
</dbReference>
<dbReference type="CDD" id="cd16964">
    <property type="entry name" value="YqgF"/>
    <property type="match status" value="1"/>
</dbReference>
<dbReference type="FunFam" id="3.30.420.140:FF:000003">
    <property type="entry name" value="Putative pre-16S rRNA nuclease"/>
    <property type="match status" value="1"/>
</dbReference>
<dbReference type="Gene3D" id="3.30.420.140">
    <property type="entry name" value="YqgF/RNase H-like domain"/>
    <property type="match status" value="1"/>
</dbReference>
<dbReference type="HAMAP" id="MF_00651">
    <property type="entry name" value="Nuclease_YqgF"/>
    <property type="match status" value="1"/>
</dbReference>
<dbReference type="InterPro" id="IPR012337">
    <property type="entry name" value="RNaseH-like_sf"/>
</dbReference>
<dbReference type="InterPro" id="IPR005227">
    <property type="entry name" value="YqgF"/>
</dbReference>
<dbReference type="InterPro" id="IPR006641">
    <property type="entry name" value="YqgF/RNaseH-like_dom"/>
</dbReference>
<dbReference type="InterPro" id="IPR037027">
    <property type="entry name" value="YqgF/RNaseH-like_dom_sf"/>
</dbReference>
<dbReference type="NCBIfam" id="TIGR00250">
    <property type="entry name" value="RNAse_H_YqgF"/>
    <property type="match status" value="1"/>
</dbReference>
<dbReference type="PANTHER" id="PTHR33317">
    <property type="entry name" value="POLYNUCLEOTIDYL TRANSFERASE, RIBONUCLEASE H-LIKE SUPERFAMILY PROTEIN"/>
    <property type="match status" value="1"/>
</dbReference>
<dbReference type="PANTHER" id="PTHR33317:SF4">
    <property type="entry name" value="POLYNUCLEOTIDYL TRANSFERASE, RIBONUCLEASE H-LIKE SUPERFAMILY PROTEIN"/>
    <property type="match status" value="1"/>
</dbReference>
<dbReference type="Pfam" id="PF03652">
    <property type="entry name" value="RuvX"/>
    <property type="match status" value="1"/>
</dbReference>
<dbReference type="SMART" id="SM00732">
    <property type="entry name" value="YqgFc"/>
    <property type="match status" value="1"/>
</dbReference>
<dbReference type="SUPFAM" id="SSF53098">
    <property type="entry name" value="Ribonuclease H-like"/>
    <property type="match status" value="1"/>
</dbReference>
<organism>
    <name type="scientific">Streptococcus pneumoniae (strain JJA)</name>
    <dbReference type="NCBI Taxonomy" id="488222"/>
    <lineage>
        <taxon>Bacteria</taxon>
        <taxon>Bacillati</taxon>
        <taxon>Bacillota</taxon>
        <taxon>Bacilli</taxon>
        <taxon>Lactobacillales</taxon>
        <taxon>Streptococcaceae</taxon>
        <taxon>Streptococcus</taxon>
    </lineage>
</organism>
<evidence type="ECO:0000255" key="1">
    <source>
        <dbReference type="HAMAP-Rule" id="MF_00651"/>
    </source>
</evidence>
<comment type="function">
    <text evidence="1">Could be a nuclease involved in processing of the 5'-end of pre-16S rRNA.</text>
</comment>
<comment type="subcellular location">
    <subcellularLocation>
        <location evidence="1">Cytoplasm</location>
    </subcellularLocation>
</comment>
<comment type="similarity">
    <text evidence="1">Belongs to the YqgF nuclease family.</text>
</comment>
<keyword id="KW-0963">Cytoplasm</keyword>
<keyword id="KW-0378">Hydrolase</keyword>
<keyword id="KW-0540">Nuclease</keyword>
<keyword id="KW-0690">Ribosome biogenesis</keyword>
<proteinExistence type="inferred from homology"/>